<evidence type="ECO:0000256" key="1">
    <source>
        <dbReference type="SAM" id="MobiDB-lite"/>
    </source>
</evidence>
<evidence type="ECO:0000269" key="2">
    <source>
    </source>
</evidence>
<evidence type="ECO:0000269" key="3">
    <source>
    </source>
</evidence>
<evidence type="ECO:0000269" key="4">
    <source>
    </source>
</evidence>
<evidence type="ECO:0000269" key="5">
    <source ref="8"/>
</evidence>
<evidence type="ECO:0000303" key="6">
    <source ref="8"/>
</evidence>
<evidence type="ECO:0000305" key="7"/>
<evidence type="ECO:0000312" key="8">
    <source>
        <dbReference type="Araport" id="AT1G54410"/>
    </source>
</evidence>
<evidence type="ECO:0000312" key="9">
    <source>
        <dbReference type="EMBL" id="AAD25619.1"/>
    </source>
</evidence>
<feature type="chain" id="PRO_0000433971" description="Dehydrin HIRD11">
    <location>
        <begin position="1"/>
        <end position="98"/>
    </location>
</feature>
<feature type="region of interest" description="Disordered" evidence="1">
    <location>
        <begin position="1"/>
        <end position="98"/>
    </location>
</feature>
<feature type="compositionally biased region" description="Basic and acidic residues" evidence="1">
    <location>
        <begin position="19"/>
        <end position="72"/>
    </location>
</feature>
<feature type="compositionally biased region" description="Basic residues" evidence="1">
    <location>
        <begin position="73"/>
        <end position="82"/>
    </location>
</feature>
<feature type="sequence conflict" description="In Ref. 1; AAN60326." evidence="7" ref="1">
    <original>D</original>
    <variation>V</variation>
    <location>
        <position position="94"/>
    </location>
</feature>
<feature type="sequence conflict" description="In Ref. 6; AAM67282." evidence="7" ref="6">
    <original>D</original>
    <variation>I</variation>
    <location>
        <position position="98"/>
    </location>
</feature>
<proteinExistence type="evidence at protein level"/>
<gene>
    <name evidence="6" type="primary">HIRD11</name>
    <name evidence="7" type="synonym">SRC1</name>
    <name evidence="8" type="ordered locus">At1g54410</name>
    <name evidence="9" type="ORF">F20D21.23</name>
</gene>
<organism>
    <name type="scientific">Arabidopsis thaliana</name>
    <name type="common">Mouse-ear cress</name>
    <dbReference type="NCBI Taxonomy" id="3702"/>
    <lineage>
        <taxon>Eukaryota</taxon>
        <taxon>Viridiplantae</taxon>
        <taxon>Streptophyta</taxon>
        <taxon>Embryophyta</taxon>
        <taxon>Tracheophyta</taxon>
        <taxon>Spermatophyta</taxon>
        <taxon>Magnoliopsida</taxon>
        <taxon>eudicotyledons</taxon>
        <taxon>Gunneridae</taxon>
        <taxon>Pentapetalae</taxon>
        <taxon>rosids</taxon>
        <taxon>malvids</taxon>
        <taxon>Brassicales</taxon>
        <taxon>Brassicaceae</taxon>
        <taxon>Camelineae</taxon>
        <taxon>Arabidopsis</taxon>
    </lineage>
</organism>
<comment type="function">
    <text evidence="3 5">Intrinsically disordered and metal-binding protein. Binds to the divalent cations cobalt, nickel, copper and zinc, but not to magnesium, calcium, manganese or cadmium (Ref.8). Binding to metal ions decreases disordered state, decreases susceptibility to trypsin and promotes self-association. Can reduce the formation of reactive oxygen species (ROS) in a copper-ascorbate in vitro system (PubMed:23382551).</text>
</comment>
<comment type="subunit">
    <text evidence="4">Interacts with PXL1.</text>
</comment>
<comment type="subcellular location">
    <subcellularLocation>
        <location evidence="5">Cytoplasm</location>
    </subcellularLocation>
    <subcellularLocation>
        <location evidence="5">Nucleus</location>
    </subcellularLocation>
</comment>
<comment type="tissue specificity">
    <text evidence="5">Highly expressed in the cambial zone of the stem vasculature (at protein level). Expressed in roots, rosettes leaves, stems, cauline leaves, flowers and siliques.</text>
</comment>
<comment type="induction">
    <text evidence="2">By cold stress (PubMed:15165189).</text>
</comment>
<comment type="PTM">
    <text evidence="4 5">Phosphorylated in vivo (Ref.8). Phosphorylated in vitro by PXL1 (PubMed:25602612).</text>
</comment>
<comment type="similarity">
    <text evidence="7">Belongs to the KS-type dehydrin family.</text>
</comment>
<name>HRD11_ARATH</name>
<sequence>MAGLINKIGDALHIGGGNKEGEHKKEEEHKKHVDEHKSGEHKEGIVDKIKDKIHGGEGKSHDGEGKSHDGEKKKKKDKKEKKHHDDGHHSSSSDSDSD</sequence>
<dbReference type="EMBL" id="AF083768">
    <property type="protein sequence ID" value="AAN60326.1"/>
    <property type="molecule type" value="mRNA"/>
</dbReference>
<dbReference type="EMBL" id="AC005287">
    <property type="protein sequence ID" value="AAD25619.1"/>
    <property type="molecule type" value="Genomic_DNA"/>
</dbReference>
<dbReference type="EMBL" id="CP002684">
    <property type="protein sequence ID" value="AEE33100.1"/>
    <property type="molecule type" value="Genomic_DNA"/>
</dbReference>
<dbReference type="EMBL" id="AF325000">
    <property type="protein sequence ID" value="AAG40352.1"/>
    <property type="molecule type" value="mRNA"/>
</dbReference>
<dbReference type="EMBL" id="AY070750">
    <property type="protein sequence ID" value="AAL50089.1"/>
    <property type="molecule type" value="mRNA"/>
</dbReference>
<dbReference type="EMBL" id="AY097376">
    <property type="protein sequence ID" value="AAM19892.1"/>
    <property type="molecule type" value="mRNA"/>
</dbReference>
<dbReference type="EMBL" id="AK230245">
    <property type="protein sequence ID" value="BAF02048.1"/>
    <property type="molecule type" value="mRNA"/>
</dbReference>
<dbReference type="EMBL" id="AY084428">
    <property type="protein sequence ID" value="AAM67282.1"/>
    <property type="molecule type" value="mRNA"/>
</dbReference>
<dbReference type="PIR" id="H96585">
    <property type="entry name" value="H96585"/>
</dbReference>
<dbReference type="RefSeq" id="NP_175843.1">
    <property type="nucleotide sequence ID" value="NM_104319.6"/>
</dbReference>
<dbReference type="FunCoup" id="Q9SLJ2">
    <property type="interactions" value="22"/>
</dbReference>
<dbReference type="STRING" id="3702.Q9SLJ2"/>
<dbReference type="iPTMnet" id="Q9SLJ2"/>
<dbReference type="PaxDb" id="3702-AT1G54410.1"/>
<dbReference type="ProteomicsDB" id="230140"/>
<dbReference type="EnsemblPlants" id="AT1G54410.1">
    <property type="protein sequence ID" value="AT1G54410.1"/>
    <property type="gene ID" value="AT1G54410"/>
</dbReference>
<dbReference type="GeneID" id="841883"/>
<dbReference type="Gramene" id="AT1G54410.1">
    <property type="protein sequence ID" value="AT1G54410.1"/>
    <property type="gene ID" value="AT1G54410"/>
</dbReference>
<dbReference type="KEGG" id="ath:AT1G54410"/>
<dbReference type="Araport" id="AT1G54410"/>
<dbReference type="TAIR" id="AT1G54410">
    <property type="gene designation" value="HIRD11"/>
</dbReference>
<dbReference type="eggNOG" id="ENOG502S99J">
    <property type="taxonomic scope" value="Eukaryota"/>
</dbReference>
<dbReference type="HOGENOM" id="CLU_144452_1_0_1"/>
<dbReference type="InParanoid" id="Q9SLJ2"/>
<dbReference type="OMA" id="HHTEEGH"/>
<dbReference type="PRO" id="PR:Q9SLJ2"/>
<dbReference type="Proteomes" id="UP000006548">
    <property type="component" value="Chromosome 1"/>
</dbReference>
<dbReference type="ExpressionAtlas" id="Q9SLJ2">
    <property type="expression patterns" value="baseline and differential"/>
</dbReference>
<dbReference type="GO" id="GO:0005737">
    <property type="term" value="C:cytoplasm"/>
    <property type="evidence" value="ECO:0000314"/>
    <property type="project" value="UniProtKB"/>
</dbReference>
<dbReference type="GO" id="GO:0005829">
    <property type="term" value="C:cytosol"/>
    <property type="evidence" value="ECO:0007005"/>
    <property type="project" value="TAIR"/>
</dbReference>
<dbReference type="GO" id="GO:0005634">
    <property type="term" value="C:nucleus"/>
    <property type="evidence" value="ECO:0000314"/>
    <property type="project" value="UniProtKB"/>
</dbReference>
<dbReference type="GO" id="GO:0050897">
    <property type="term" value="F:cobalt ion binding"/>
    <property type="evidence" value="ECO:0000314"/>
    <property type="project" value="UniProtKB"/>
</dbReference>
<dbReference type="GO" id="GO:0005507">
    <property type="term" value="F:copper ion binding"/>
    <property type="evidence" value="ECO:0000314"/>
    <property type="project" value="UniProtKB"/>
</dbReference>
<dbReference type="GO" id="GO:0003729">
    <property type="term" value="F:mRNA binding"/>
    <property type="evidence" value="ECO:0000314"/>
    <property type="project" value="TAIR"/>
</dbReference>
<dbReference type="GO" id="GO:0016151">
    <property type="term" value="F:nickel cation binding"/>
    <property type="evidence" value="ECO:0000314"/>
    <property type="project" value="UniProtKB"/>
</dbReference>
<dbReference type="GO" id="GO:0008270">
    <property type="term" value="F:zinc ion binding"/>
    <property type="evidence" value="ECO:0000314"/>
    <property type="project" value="UniProtKB"/>
</dbReference>
<dbReference type="GO" id="GO:0010730">
    <property type="term" value="P:negative regulation of hydrogen peroxide biosynthetic process"/>
    <property type="evidence" value="ECO:0000314"/>
    <property type="project" value="TAIR"/>
</dbReference>
<dbReference type="DisProt" id="DP01300"/>
<dbReference type="InterPro" id="IPR039285">
    <property type="entry name" value="HIRD11-like"/>
</dbReference>
<dbReference type="PANTHER" id="PTHR34941">
    <property type="entry name" value="DEHYDRIN HIRD11"/>
    <property type="match status" value="1"/>
</dbReference>
<dbReference type="PANTHER" id="PTHR34941:SF1">
    <property type="entry name" value="DEHYDRIN HIRD11"/>
    <property type="match status" value="1"/>
</dbReference>
<protein>
    <recommendedName>
        <fullName evidence="7">Dehydrin HIRD11</fullName>
    </recommendedName>
    <alternativeName>
        <fullName evidence="6">Histidine-rich dehydrin of 11 kDa</fullName>
        <shortName evidence="6">AtHIRD11</shortName>
    </alternativeName>
    <alternativeName>
        <fullName evidence="7">Protein SRC1 homolog</fullName>
    </alternativeName>
</protein>
<reference key="1">
    <citation type="submission" date="1998-08" db="EMBL/GenBank/DDBJ databases">
        <title>Signal peptide selection derived cDNAs from Arabidopsis thaliana leaves and guard cells.</title>
        <authorList>
            <person name="Stracke R."/>
            <person name="Palme K."/>
        </authorList>
    </citation>
    <scope>NUCLEOTIDE SEQUENCE [MRNA]</scope>
</reference>
<reference key="2">
    <citation type="journal article" date="2000" name="Nature">
        <title>Sequence and analysis of chromosome 1 of the plant Arabidopsis thaliana.</title>
        <authorList>
            <person name="Theologis A."/>
            <person name="Ecker J.R."/>
            <person name="Palm C.J."/>
            <person name="Federspiel N.A."/>
            <person name="Kaul S."/>
            <person name="White O."/>
            <person name="Alonso J."/>
            <person name="Altafi H."/>
            <person name="Araujo R."/>
            <person name="Bowman C.L."/>
            <person name="Brooks S.Y."/>
            <person name="Buehler E."/>
            <person name="Chan A."/>
            <person name="Chao Q."/>
            <person name="Chen H."/>
            <person name="Cheuk R.F."/>
            <person name="Chin C.W."/>
            <person name="Chung M.K."/>
            <person name="Conn L."/>
            <person name="Conway A.B."/>
            <person name="Conway A.R."/>
            <person name="Creasy T.H."/>
            <person name="Dewar K."/>
            <person name="Dunn P."/>
            <person name="Etgu P."/>
            <person name="Feldblyum T.V."/>
            <person name="Feng J.-D."/>
            <person name="Fong B."/>
            <person name="Fujii C.Y."/>
            <person name="Gill J.E."/>
            <person name="Goldsmith A.D."/>
            <person name="Haas B."/>
            <person name="Hansen N.F."/>
            <person name="Hughes B."/>
            <person name="Huizar L."/>
            <person name="Hunter J.L."/>
            <person name="Jenkins J."/>
            <person name="Johnson-Hopson C."/>
            <person name="Khan S."/>
            <person name="Khaykin E."/>
            <person name="Kim C.J."/>
            <person name="Koo H.L."/>
            <person name="Kremenetskaia I."/>
            <person name="Kurtz D.B."/>
            <person name="Kwan A."/>
            <person name="Lam B."/>
            <person name="Langin-Hooper S."/>
            <person name="Lee A."/>
            <person name="Lee J.M."/>
            <person name="Lenz C.A."/>
            <person name="Li J.H."/>
            <person name="Li Y.-P."/>
            <person name="Lin X."/>
            <person name="Liu S.X."/>
            <person name="Liu Z.A."/>
            <person name="Luros J.S."/>
            <person name="Maiti R."/>
            <person name="Marziali A."/>
            <person name="Militscher J."/>
            <person name="Miranda M."/>
            <person name="Nguyen M."/>
            <person name="Nierman W.C."/>
            <person name="Osborne B.I."/>
            <person name="Pai G."/>
            <person name="Peterson J."/>
            <person name="Pham P.K."/>
            <person name="Rizzo M."/>
            <person name="Rooney T."/>
            <person name="Rowley D."/>
            <person name="Sakano H."/>
            <person name="Salzberg S.L."/>
            <person name="Schwartz J.R."/>
            <person name="Shinn P."/>
            <person name="Southwick A.M."/>
            <person name="Sun H."/>
            <person name="Tallon L.J."/>
            <person name="Tambunga G."/>
            <person name="Toriumi M.J."/>
            <person name="Town C.D."/>
            <person name="Utterback T."/>
            <person name="Van Aken S."/>
            <person name="Vaysberg M."/>
            <person name="Vysotskaia V.S."/>
            <person name="Walker M."/>
            <person name="Wu D."/>
            <person name="Yu G."/>
            <person name="Fraser C.M."/>
            <person name="Venter J.C."/>
            <person name="Davis R.W."/>
        </authorList>
    </citation>
    <scope>NUCLEOTIDE SEQUENCE [LARGE SCALE GENOMIC DNA]</scope>
    <source>
        <strain>cv. Columbia</strain>
    </source>
</reference>
<reference key="3">
    <citation type="journal article" date="2017" name="Plant J.">
        <title>Araport11: a complete reannotation of the Arabidopsis thaliana reference genome.</title>
        <authorList>
            <person name="Cheng C.Y."/>
            <person name="Krishnakumar V."/>
            <person name="Chan A.P."/>
            <person name="Thibaud-Nissen F."/>
            <person name="Schobel S."/>
            <person name="Town C.D."/>
        </authorList>
    </citation>
    <scope>GENOME REANNOTATION</scope>
    <source>
        <strain>cv. Columbia</strain>
    </source>
</reference>
<reference key="4">
    <citation type="journal article" date="2003" name="Science">
        <title>Empirical analysis of transcriptional activity in the Arabidopsis genome.</title>
        <authorList>
            <person name="Yamada K."/>
            <person name="Lim J."/>
            <person name="Dale J.M."/>
            <person name="Chen H."/>
            <person name="Shinn P."/>
            <person name="Palm C.J."/>
            <person name="Southwick A.M."/>
            <person name="Wu H.C."/>
            <person name="Kim C.J."/>
            <person name="Nguyen M."/>
            <person name="Pham P.K."/>
            <person name="Cheuk R.F."/>
            <person name="Karlin-Newmann G."/>
            <person name="Liu S.X."/>
            <person name="Lam B."/>
            <person name="Sakano H."/>
            <person name="Wu T."/>
            <person name="Yu G."/>
            <person name="Miranda M."/>
            <person name="Quach H.L."/>
            <person name="Tripp M."/>
            <person name="Chang C.H."/>
            <person name="Lee J.M."/>
            <person name="Toriumi M.J."/>
            <person name="Chan M.M."/>
            <person name="Tang C.C."/>
            <person name="Onodera C.S."/>
            <person name="Deng J.M."/>
            <person name="Akiyama K."/>
            <person name="Ansari Y."/>
            <person name="Arakawa T."/>
            <person name="Banh J."/>
            <person name="Banno F."/>
            <person name="Bowser L."/>
            <person name="Brooks S.Y."/>
            <person name="Carninci P."/>
            <person name="Chao Q."/>
            <person name="Choy N."/>
            <person name="Enju A."/>
            <person name="Goldsmith A.D."/>
            <person name="Gurjal M."/>
            <person name="Hansen N.F."/>
            <person name="Hayashizaki Y."/>
            <person name="Johnson-Hopson C."/>
            <person name="Hsuan V.W."/>
            <person name="Iida K."/>
            <person name="Karnes M."/>
            <person name="Khan S."/>
            <person name="Koesema E."/>
            <person name="Ishida J."/>
            <person name="Jiang P.X."/>
            <person name="Jones T."/>
            <person name="Kawai J."/>
            <person name="Kamiya A."/>
            <person name="Meyers C."/>
            <person name="Nakajima M."/>
            <person name="Narusaka M."/>
            <person name="Seki M."/>
            <person name="Sakurai T."/>
            <person name="Satou M."/>
            <person name="Tamse R."/>
            <person name="Vaysberg M."/>
            <person name="Wallender E.K."/>
            <person name="Wong C."/>
            <person name="Yamamura Y."/>
            <person name="Yuan S."/>
            <person name="Shinozaki K."/>
            <person name="Davis R.W."/>
            <person name="Theologis A."/>
            <person name="Ecker J.R."/>
        </authorList>
    </citation>
    <scope>NUCLEOTIDE SEQUENCE [LARGE SCALE MRNA]</scope>
    <source>
        <strain>cv. Columbia</strain>
    </source>
</reference>
<reference key="5">
    <citation type="submission" date="2006-07" db="EMBL/GenBank/DDBJ databases">
        <title>Large-scale analysis of RIKEN Arabidopsis full-length (RAFL) cDNAs.</title>
        <authorList>
            <person name="Totoki Y."/>
            <person name="Seki M."/>
            <person name="Ishida J."/>
            <person name="Nakajima M."/>
            <person name="Enju A."/>
            <person name="Kamiya A."/>
            <person name="Narusaka M."/>
            <person name="Shin-i T."/>
            <person name="Nakagawa M."/>
            <person name="Sakamoto N."/>
            <person name="Oishi K."/>
            <person name="Kohara Y."/>
            <person name="Kobayashi M."/>
            <person name="Toyoda A."/>
            <person name="Sakaki Y."/>
            <person name="Sakurai T."/>
            <person name="Iida K."/>
            <person name="Akiyama K."/>
            <person name="Satou M."/>
            <person name="Toyoda T."/>
            <person name="Konagaya A."/>
            <person name="Carninci P."/>
            <person name="Kawai J."/>
            <person name="Hayashizaki Y."/>
            <person name="Shinozaki K."/>
        </authorList>
    </citation>
    <scope>NUCLEOTIDE SEQUENCE [LARGE SCALE MRNA]</scope>
    <source>
        <strain>cv. Columbia</strain>
    </source>
</reference>
<reference key="6">
    <citation type="submission" date="2002-03" db="EMBL/GenBank/DDBJ databases">
        <title>Full-length cDNA from Arabidopsis thaliana.</title>
        <authorList>
            <person name="Brover V.V."/>
            <person name="Troukhan M.E."/>
            <person name="Alexandrov N.A."/>
            <person name="Lu Y.-P."/>
            <person name="Flavell R.B."/>
            <person name="Feldmann K.A."/>
        </authorList>
    </citation>
    <scope>NUCLEOTIDE SEQUENCE [LARGE SCALE MRNA]</scope>
</reference>
<reference key="7">
    <citation type="journal article" date="2004" name="Plant J.">
        <title>Identification of cold-inducible downstream genes of the Arabidopsis DREB1A/CBF3 transcriptional factor using two microarray systems.</title>
        <authorList>
            <person name="Maruyama K."/>
            <person name="Sakuma Y."/>
            <person name="Kasuga M."/>
            <person name="Ito Y."/>
            <person name="Seki M."/>
            <person name="Goda H."/>
            <person name="Shimada Y."/>
            <person name="Yoshida S."/>
            <person name="Shinozaki K."/>
            <person name="Yamaguchi-Shinozaki K."/>
        </authorList>
    </citation>
    <scope>INDUCTION BY COLD STRESS</scope>
</reference>
<reference key="8">
    <citation type="journal article" date="2011" name="Acta Physiol. Plant.">
        <title>Biochemical characterization of the Arabidopsis KS-type dehydrin protein, whose gene expression is constitutively abundant rather than stress dependent.</title>
        <authorList>
            <person name="Hara M."/>
            <person name="Shinoda Y."/>
            <person name="Kubo M."/>
            <person name="Kashima D."/>
            <person name="Takahashi I."/>
            <person name="Kato T."/>
            <person name="Horiike T."/>
            <person name="Kuboi T."/>
        </authorList>
    </citation>
    <scope>FUNCTION</scope>
    <scope>SUBCELLULAR LOCATION</scope>
    <scope>PHOSPHORYLATION</scope>
    <scope>TISSUE SPECIFICITY</scope>
</reference>
<reference key="9">
    <citation type="journal article" date="2013" name="J. Exp. Bot.">
        <title>A KS-type dehydrin and its related domains reduce Cu-promoted radical generation and the histidine residues contribute to the radical-reducing activities.</title>
        <authorList>
            <person name="Hara M."/>
            <person name="Kondo M."/>
            <person name="Kato T."/>
        </authorList>
    </citation>
    <scope>FUNCTION</scope>
</reference>
<reference key="10">
    <citation type="journal article" date="2015" name="J. Plant Physiol.">
        <title>Molecular characterization of the cold- and heat-induced Arabidopsis PXL1 gene and its potential role in transduction pathways under temperature fluctuations.</title>
        <authorList>
            <person name="Jung C.G."/>
            <person name="Hwang S.G."/>
            <person name="Park Y.C."/>
            <person name="Park H.M."/>
            <person name="Kim D.S."/>
            <person name="Park D.H."/>
            <person name="Jang C.S."/>
        </authorList>
    </citation>
    <scope>INTERACTION WITH PXL1</scope>
    <scope>PHOSPHORYLATION</scope>
</reference>
<accession>Q9SLJ2</accession>
<accession>Q8H7A6</accession>
<accession>Q8LG75</accession>
<keyword id="KW-0963">Cytoplasm</keyword>
<keyword id="KW-0479">Metal-binding</keyword>
<keyword id="KW-0539">Nucleus</keyword>
<keyword id="KW-1185">Reference proteome</keyword>